<proteinExistence type="inferred from homology"/>
<name>RLUD_HAEIN</name>
<protein>
    <recommendedName>
        <fullName evidence="2">Ribosomal large subunit pseudouridine synthase D</fullName>
        <ecNumber evidence="2">5.4.99.23</ecNumber>
    </recommendedName>
    <alternativeName>
        <fullName>23S rRNA pseudouridine(1911/1915/1917) synthase</fullName>
    </alternativeName>
    <alternativeName>
        <fullName>rRNA pseudouridylate synthase D</fullName>
    </alternativeName>
    <alternativeName>
        <fullName>rRNA-uridine isomerase D</fullName>
    </alternativeName>
</protein>
<sequence>MPQITLSAEVQPEQMGQRLDQTLAELFPEYSRSRLKTWIEADLVKLNDRITNIPREKVLGGERIEIIVEVEDETRFEAENIPLNIVYEDDDIIVINKPKDLVVHPGAGNPNGTVLNALLYHYPPIVEVPRAGIVHRLDKDTTGLMVVAKTIPAQTKLVRDLQKRKITREYEAVASGIMTKGGTVDQPMARHATKRTLMAVHPMGKPAVTHYRIMENYRNYTRLRLRLETGRTHQIRVHMAHIAHPLLGDQTYGGRPRPPKNASEDFMEVLRNFKRQALHAVMLRLAHPITGEMMEWYAPLPDDFVELLNALKADYLEHQDELDY</sequence>
<organism>
    <name type="scientific">Haemophilus influenzae (strain ATCC 51907 / DSM 11121 / KW20 / Rd)</name>
    <dbReference type="NCBI Taxonomy" id="71421"/>
    <lineage>
        <taxon>Bacteria</taxon>
        <taxon>Pseudomonadati</taxon>
        <taxon>Pseudomonadota</taxon>
        <taxon>Gammaproteobacteria</taxon>
        <taxon>Pasteurellales</taxon>
        <taxon>Pasteurellaceae</taxon>
        <taxon>Haemophilus</taxon>
    </lineage>
</organism>
<feature type="chain" id="PRO_0000162692" description="Ribosomal large subunit pseudouridine synthase D">
    <location>
        <begin position="1"/>
        <end position="324"/>
    </location>
</feature>
<feature type="domain" description="S4 RNA-binding" evidence="3">
    <location>
        <begin position="17"/>
        <end position="90"/>
    </location>
</feature>
<feature type="active site" evidence="1">
    <location>
        <position position="138"/>
    </location>
</feature>
<keyword id="KW-0963">Cytoplasm</keyword>
<keyword id="KW-0413">Isomerase</keyword>
<keyword id="KW-1185">Reference proteome</keyword>
<keyword id="KW-0694">RNA-binding</keyword>
<keyword id="KW-0698">rRNA processing</keyword>
<evidence type="ECO:0000250" key="1"/>
<evidence type="ECO:0000250" key="2">
    <source>
        <dbReference type="UniProtKB" id="P33643"/>
    </source>
</evidence>
<evidence type="ECO:0000255" key="3">
    <source>
        <dbReference type="PROSITE-ProRule" id="PRU00182"/>
    </source>
</evidence>
<evidence type="ECO:0000305" key="4"/>
<gene>
    <name type="primary">rluD</name>
    <name type="synonym">sfhB</name>
    <name type="ordered locus">HI_0176</name>
</gene>
<accession>P44445</accession>
<comment type="function">
    <text evidence="2">Responsible for synthesis of pseudouridine from uracil at positions 1911, 1915 and 1917 in 23S ribosomal RNA.</text>
</comment>
<comment type="catalytic activity">
    <reaction evidence="2">
        <text>uridine(1911/1915/1917) in 23S rRNA = pseudouridine(1911/1915/1917) in 23S rRNA</text>
        <dbReference type="Rhea" id="RHEA:42524"/>
        <dbReference type="Rhea" id="RHEA-COMP:10097"/>
        <dbReference type="Rhea" id="RHEA-COMP:10098"/>
        <dbReference type="ChEBI" id="CHEBI:65314"/>
        <dbReference type="ChEBI" id="CHEBI:65315"/>
        <dbReference type="EC" id="5.4.99.23"/>
    </reaction>
</comment>
<comment type="subcellular location">
    <subcellularLocation>
        <location evidence="2">Cytoplasm</location>
    </subcellularLocation>
    <text evidence="2">Associates with late stage pre-50S ribosomal subunits.</text>
</comment>
<comment type="similarity">
    <text evidence="4">Belongs to the pseudouridine synthase RluA family.</text>
</comment>
<dbReference type="EC" id="5.4.99.23" evidence="2"/>
<dbReference type="EMBL" id="L42023">
    <property type="protein sequence ID" value="AAC21845.1"/>
    <property type="molecule type" value="Genomic_DNA"/>
</dbReference>
<dbReference type="PIR" id="F64144">
    <property type="entry name" value="F64144"/>
</dbReference>
<dbReference type="RefSeq" id="NP_438344.1">
    <property type="nucleotide sequence ID" value="NC_000907.1"/>
</dbReference>
<dbReference type="SMR" id="P44445"/>
<dbReference type="STRING" id="71421.HI_0176"/>
<dbReference type="EnsemblBacteria" id="AAC21845">
    <property type="protein sequence ID" value="AAC21845"/>
    <property type="gene ID" value="HI_0176"/>
</dbReference>
<dbReference type="KEGG" id="hin:HI_0176"/>
<dbReference type="PATRIC" id="fig|71421.8.peg.180"/>
<dbReference type="eggNOG" id="COG0564">
    <property type="taxonomic scope" value="Bacteria"/>
</dbReference>
<dbReference type="HOGENOM" id="CLU_016902_4_0_6"/>
<dbReference type="OrthoDB" id="9807829at2"/>
<dbReference type="PhylomeDB" id="P44445"/>
<dbReference type="BioCyc" id="HINF71421:G1GJ1-186-MONOMER"/>
<dbReference type="Proteomes" id="UP000000579">
    <property type="component" value="Chromosome"/>
</dbReference>
<dbReference type="GO" id="GO:0005737">
    <property type="term" value="C:cytoplasm"/>
    <property type="evidence" value="ECO:0007669"/>
    <property type="project" value="UniProtKB-SubCell"/>
</dbReference>
<dbReference type="GO" id="GO:0160140">
    <property type="term" value="F:23S rRNA pseudouridine(1911/1915/1917) synthase activity"/>
    <property type="evidence" value="ECO:0007669"/>
    <property type="project" value="UniProtKB-EC"/>
</dbReference>
<dbReference type="GO" id="GO:0009982">
    <property type="term" value="F:pseudouridine synthase activity"/>
    <property type="evidence" value="ECO:0000318"/>
    <property type="project" value="GO_Central"/>
</dbReference>
<dbReference type="GO" id="GO:0003723">
    <property type="term" value="F:RNA binding"/>
    <property type="evidence" value="ECO:0007669"/>
    <property type="project" value="UniProtKB-KW"/>
</dbReference>
<dbReference type="GO" id="GO:0000455">
    <property type="term" value="P:enzyme-directed rRNA pseudouridine synthesis"/>
    <property type="evidence" value="ECO:0000318"/>
    <property type="project" value="GO_Central"/>
</dbReference>
<dbReference type="CDD" id="cd02869">
    <property type="entry name" value="PseudoU_synth_RluA_like"/>
    <property type="match status" value="1"/>
</dbReference>
<dbReference type="CDD" id="cd00165">
    <property type="entry name" value="S4"/>
    <property type="match status" value="1"/>
</dbReference>
<dbReference type="FunFam" id="3.10.290.10:FF:000011">
    <property type="entry name" value="Pseudouridine synthase"/>
    <property type="match status" value="1"/>
</dbReference>
<dbReference type="FunFam" id="3.30.2350.10:FF:000006">
    <property type="entry name" value="Pseudouridine synthase"/>
    <property type="match status" value="1"/>
</dbReference>
<dbReference type="Gene3D" id="3.30.2350.10">
    <property type="entry name" value="Pseudouridine synthase"/>
    <property type="match status" value="1"/>
</dbReference>
<dbReference type="Gene3D" id="3.10.290.10">
    <property type="entry name" value="RNA-binding S4 domain"/>
    <property type="match status" value="1"/>
</dbReference>
<dbReference type="InterPro" id="IPR020103">
    <property type="entry name" value="PsdUridine_synth_cat_dom_sf"/>
</dbReference>
<dbReference type="InterPro" id="IPR006224">
    <property type="entry name" value="PsdUridine_synth_RluA-like_CS"/>
</dbReference>
<dbReference type="InterPro" id="IPR006225">
    <property type="entry name" value="PsdUridine_synth_RluC/D"/>
</dbReference>
<dbReference type="InterPro" id="IPR006145">
    <property type="entry name" value="PsdUridine_synth_RsuA/RluA"/>
</dbReference>
<dbReference type="InterPro" id="IPR050188">
    <property type="entry name" value="RluA_PseudoU_synthase"/>
</dbReference>
<dbReference type="InterPro" id="IPR002942">
    <property type="entry name" value="S4_RNA-bd"/>
</dbReference>
<dbReference type="InterPro" id="IPR036986">
    <property type="entry name" value="S4_RNA-bd_sf"/>
</dbReference>
<dbReference type="NCBIfam" id="NF008385">
    <property type="entry name" value="PRK11180.1"/>
    <property type="match status" value="1"/>
</dbReference>
<dbReference type="NCBIfam" id="TIGR00005">
    <property type="entry name" value="rluA_subfam"/>
    <property type="match status" value="1"/>
</dbReference>
<dbReference type="PANTHER" id="PTHR21600">
    <property type="entry name" value="MITOCHONDRIAL RNA PSEUDOURIDINE SYNTHASE"/>
    <property type="match status" value="1"/>
</dbReference>
<dbReference type="PANTHER" id="PTHR21600:SF44">
    <property type="entry name" value="RIBOSOMAL LARGE SUBUNIT PSEUDOURIDINE SYNTHASE D"/>
    <property type="match status" value="1"/>
</dbReference>
<dbReference type="Pfam" id="PF00849">
    <property type="entry name" value="PseudoU_synth_2"/>
    <property type="match status" value="1"/>
</dbReference>
<dbReference type="Pfam" id="PF01479">
    <property type="entry name" value="S4"/>
    <property type="match status" value="1"/>
</dbReference>
<dbReference type="SMART" id="SM00363">
    <property type="entry name" value="S4"/>
    <property type="match status" value="1"/>
</dbReference>
<dbReference type="SUPFAM" id="SSF55174">
    <property type="entry name" value="Alpha-L RNA-binding motif"/>
    <property type="match status" value="1"/>
</dbReference>
<dbReference type="SUPFAM" id="SSF55120">
    <property type="entry name" value="Pseudouridine synthase"/>
    <property type="match status" value="1"/>
</dbReference>
<dbReference type="PROSITE" id="PS01129">
    <property type="entry name" value="PSI_RLU"/>
    <property type="match status" value="1"/>
</dbReference>
<dbReference type="PROSITE" id="PS50889">
    <property type="entry name" value="S4"/>
    <property type="match status" value="1"/>
</dbReference>
<reference key="1">
    <citation type="journal article" date="1995" name="Science">
        <title>Whole-genome random sequencing and assembly of Haemophilus influenzae Rd.</title>
        <authorList>
            <person name="Fleischmann R.D."/>
            <person name="Adams M.D."/>
            <person name="White O."/>
            <person name="Clayton R.A."/>
            <person name="Kirkness E.F."/>
            <person name="Kerlavage A.R."/>
            <person name="Bult C.J."/>
            <person name="Tomb J.-F."/>
            <person name="Dougherty B.A."/>
            <person name="Merrick J.M."/>
            <person name="McKenney K."/>
            <person name="Sutton G.G."/>
            <person name="FitzHugh W."/>
            <person name="Fields C.A."/>
            <person name="Gocayne J.D."/>
            <person name="Scott J.D."/>
            <person name="Shirley R."/>
            <person name="Liu L.-I."/>
            <person name="Glodek A."/>
            <person name="Kelley J.M."/>
            <person name="Weidman J.F."/>
            <person name="Phillips C.A."/>
            <person name="Spriggs T."/>
            <person name="Hedblom E."/>
            <person name="Cotton M.D."/>
            <person name="Utterback T.R."/>
            <person name="Hanna M.C."/>
            <person name="Nguyen D.T."/>
            <person name="Saudek D.M."/>
            <person name="Brandon R.C."/>
            <person name="Fine L.D."/>
            <person name="Fritchman J.L."/>
            <person name="Fuhrmann J.L."/>
            <person name="Geoghagen N.S.M."/>
            <person name="Gnehm C.L."/>
            <person name="McDonald L.A."/>
            <person name="Small K.V."/>
            <person name="Fraser C.M."/>
            <person name="Smith H.O."/>
            <person name="Venter J.C."/>
        </authorList>
    </citation>
    <scope>NUCLEOTIDE SEQUENCE [LARGE SCALE GENOMIC DNA]</scope>
    <source>
        <strain>ATCC 51907 / DSM 11121 / KW20 / Rd</strain>
    </source>
</reference>